<proteinExistence type="inferred from homology"/>
<name>RPOA_WOLSU</name>
<dbReference type="EC" id="2.7.7.6" evidence="2"/>
<dbReference type="EMBL" id="BX571661">
    <property type="protein sequence ID" value="CAE10719.1"/>
    <property type="molecule type" value="Genomic_DNA"/>
</dbReference>
<dbReference type="RefSeq" id="WP_011139503.1">
    <property type="nucleotide sequence ID" value="NC_005090.1"/>
</dbReference>
<dbReference type="SMR" id="Q7M8F7"/>
<dbReference type="STRING" id="273121.WS1692"/>
<dbReference type="KEGG" id="wsu:WS1692"/>
<dbReference type="eggNOG" id="COG0202">
    <property type="taxonomic scope" value="Bacteria"/>
</dbReference>
<dbReference type="HOGENOM" id="CLU_053084_0_1_7"/>
<dbReference type="Proteomes" id="UP000000422">
    <property type="component" value="Chromosome"/>
</dbReference>
<dbReference type="GO" id="GO:0005737">
    <property type="term" value="C:cytoplasm"/>
    <property type="evidence" value="ECO:0007669"/>
    <property type="project" value="UniProtKB-ARBA"/>
</dbReference>
<dbReference type="GO" id="GO:0000428">
    <property type="term" value="C:DNA-directed RNA polymerase complex"/>
    <property type="evidence" value="ECO:0007669"/>
    <property type="project" value="UniProtKB-KW"/>
</dbReference>
<dbReference type="GO" id="GO:0003677">
    <property type="term" value="F:DNA binding"/>
    <property type="evidence" value="ECO:0007669"/>
    <property type="project" value="UniProtKB-UniRule"/>
</dbReference>
<dbReference type="GO" id="GO:0003899">
    <property type="term" value="F:DNA-directed RNA polymerase activity"/>
    <property type="evidence" value="ECO:0007669"/>
    <property type="project" value="UniProtKB-UniRule"/>
</dbReference>
<dbReference type="GO" id="GO:0046983">
    <property type="term" value="F:protein dimerization activity"/>
    <property type="evidence" value="ECO:0007669"/>
    <property type="project" value="InterPro"/>
</dbReference>
<dbReference type="GO" id="GO:0006351">
    <property type="term" value="P:DNA-templated transcription"/>
    <property type="evidence" value="ECO:0007669"/>
    <property type="project" value="UniProtKB-UniRule"/>
</dbReference>
<dbReference type="CDD" id="cd06928">
    <property type="entry name" value="RNAP_alpha_NTD"/>
    <property type="match status" value="1"/>
</dbReference>
<dbReference type="Gene3D" id="1.10.150.20">
    <property type="entry name" value="5' to 3' exonuclease, C-terminal subdomain"/>
    <property type="match status" value="1"/>
</dbReference>
<dbReference type="Gene3D" id="2.170.120.12">
    <property type="entry name" value="DNA-directed RNA polymerase, insert domain"/>
    <property type="match status" value="1"/>
</dbReference>
<dbReference type="Gene3D" id="3.30.1360.10">
    <property type="entry name" value="RNA polymerase, RBP11-like subunit"/>
    <property type="match status" value="1"/>
</dbReference>
<dbReference type="HAMAP" id="MF_00059">
    <property type="entry name" value="RNApol_bact_RpoA"/>
    <property type="match status" value="1"/>
</dbReference>
<dbReference type="InterPro" id="IPR011262">
    <property type="entry name" value="DNA-dir_RNA_pol_insert"/>
</dbReference>
<dbReference type="InterPro" id="IPR011263">
    <property type="entry name" value="DNA-dir_RNA_pol_RpoA/D/Rpb3"/>
</dbReference>
<dbReference type="InterPro" id="IPR011773">
    <property type="entry name" value="DNA-dir_RpoA"/>
</dbReference>
<dbReference type="InterPro" id="IPR036603">
    <property type="entry name" value="RBP11-like"/>
</dbReference>
<dbReference type="InterPro" id="IPR011260">
    <property type="entry name" value="RNAP_asu_C"/>
</dbReference>
<dbReference type="InterPro" id="IPR036643">
    <property type="entry name" value="RNApol_insert_sf"/>
</dbReference>
<dbReference type="NCBIfam" id="NF003517">
    <property type="entry name" value="PRK05182.2-3"/>
    <property type="match status" value="1"/>
</dbReference>
<dbReference type="NCBIfam" id="NF003519">
    <property type="entry name" value="PRK05182.2-5"/>
    <property type="match status" value="1"/>
</dbReference>
<dbReference type="NCBIfam" id="TIGR02027">
    <property type="entry name" value="rpoA"/>
    <property type="match status" value="1"/>
</dbReference>
<dbReference type="Pfam" id="PF01000">
    <property type="entry name" value="RNA_pol_A_bac"/>
    <property type="match status" value="1"/>
</dbReference>
<dbReference type="Pfam" id="PF03118">
    <property type="entry name" value="RNA_pol_A_CTD"/>
    <property type="match status" value="1"/>
</dbReference>
<dbReference type="Pfam" id="PF01193">
    <property type="entry name" value="RNA_pol_L"/>
    <property type="match status" value="1"/>
</dbReference>
<dbReference type="SMART" id="SM00662">
    <property type="entry name" value="RPOLD"/>
    <property type="match status" value="1"/>
</dbReference>
<dbReference type="SUPFAM" id="SSF47789">
    <property type="entry name" value="C-terminal domain of RNA polymerase alpha subunit"/>
    <property type="match status" value="1"/>
</dbReference>
<dbReference type="SUPFAM" id="SSF56553">
    <property type="entry name" value="Insert subdomain of RNA polymerase alpha subunit"/>
    <property type="match status" value="1"/>
</dbReference>
<dbReference type="SUPFAM" id="SSF55257">
    <property type="entry name" value="RBP11-like subunits of RNA polymerase"/>
    <property type="match status" value="1"/>
</dbReference>
<keyword id="KW-0240">DNA-directed RNA polymerase</keyword>
<keyword id="KW-0548">Nucleotidyltransferase</keyword>
<keyword id="KW-1185">Reference proteome</keyword>
<keyword id="KW-0804">Transcription</keyword>
<keyword id="KW-0808">Transferase</keyword>
<protein>
    <recommendedName>
        <fullName evidence="2">DNA-directed RNA polymerase subunit alpha</fullName>
        <shortName evidence="2">RNAP subunit alpha</shortName>
        <ecNumber evidence="2">2.7.7.6</ecNumber>
    </recommendedName>
    <alternativeName>
        <fullName evidence="2">RNA polymerase subunit alpha</fullName>
    </alternativeName>
    <alternativeName>
        <fullName evidence="2">Transcriptase subunit alpha</fullName>
    </alternativeName>
</protein>
<feature type="chain" id="PRO_0000175422" description="DNA-directed RNA polymerase subunit alpha">
    <location>
        <begin position="1"/>
        <end position="331"/>
    </location>
</feature>
<feature type="region of interest" description="Alpha N-terminal domain (alpha-NTD)" evidence="2">
    <location>
        <begin position="1"/>
        <end position="230"/>
    </location>
</feature>
<feature type="region of interest" description="Alpha C-terminal domain (alpha-CTD)" evidence="2">
    <location>
        <begin position="247"/>
        <end position="331"/>
    </location>
</feature>
<gene>
    <name evidence="2" type="primary">rpoA</name>
    <name type="ordered locus">WS1692</name>
</gene>
<evidence type="ECO:0000250" key="1"/>
<evidence type="ECO:0000255" key="2">
    <source>
        <dbReference type="HAMAP-Rule" id="MF_00059"/>
    </source>
</evidence>
<comment type="function">
    <text evidence="2">DNA-dependent RNA polymerase catalyzes the transcription of DNA into RNA using the four ribonucleoside triphosphates as substrates.</text>
</comment>
<comment type="catalytic activity">
    <reaction evidence="2">
        <text>RNA(n) + a ribonucleoside 5'-triphosphate = RNA(n+1) + diphosphate</text>
        <dbReference type="Rhea" id="RHEA:21248"/>
        <dbReference type="Rhea" id="RHEA-COMP:14527"/>
        <dbReference type="Rhea" id="RHEA-COMP:17342"/>
        <dbReference type="ChEBI" id="CHEBI:33019"/>
        <dbReference type="ChEBI" id="CHEBI:61557"/>
        <dbReference type="ChEBI" id="CHEBI:140395"/>
        <dbReference type="EC" id="2.7.7.6"/>
    </reaction>
</comment>
<comment type="subunit">
    <text evidence="1">Homodimer. The RNAP catalytic core consists of 2 alpha, 1 beta/beta' and 1 omega subunit. When a sigma factor is associated with the core the holoenzyme is formed, which can initiate transcription (By similarity).</text>
</comment>
<comment type="domain">
    <text evidence="2">The N-terminal domain is essential for RNAP assembly and basal transcription, whereas the C-terminal domain is involved in interaction with transcriptional regulators and with upstream promoter elements.</text>
</comment>
<comment type="similarity">
    <text evidence="2">Belongs to the RNA polymerase alpha chain family.</text>
</comment>
<reference key="1">
    <citation type="journal article" date="2003" name="Proc. Natl. Acad. Sci. U.S.A.">
        <title>Complete genome sequence and analysis of Wolinella succinogenes.</title>
        <authorList>
            <person name="Baar C."/>
            <person name="Eppinger M."/>
            <person name="Raddatz G."/>
            <person name="Simon J."/>
            <person name="Lanz C."/>
            <person name="Klimmek O."/>
            <person name="Nandakumar R."/>
            <person name="Gross R."/>
            <person name="Rosinus A."/>
            <person name="Keller H."/>
            <person name="Jagtap P."/>
            <person name="Linke B."/>
            <person name="Meyer F."/>
            <person name="Lederer H."/>
            <person name="Schuster S.C."/>
        </authorList>
    </citation>
    <scope>NUCLEOTIDE SEQUENCE [LARGE SCALE GENOMIC DNA]</scope>
    <source>
        <strain>ATCC 29543 / DSM 1740 / CCUG 13145 / JCM 31913 / LMG 7466 / NCTC 11488 / FDC 602W</strain>
    </source>
</reference>
<organism>
    <name type="scientific">Wolinella succinogenes (strain ATCC 29543 / DSM 1740 / CCUG 13145 / JCM 31913 / LMG 7466 / NCTC 11488 / FDC 602W)</name>
    <name type="common">Vibrio succinogenes</name>
    <dbReference type="NCBI Taxonomy" id="273121"/>
    <lineage>
        <taxon>Bacteria</taxon>
        <taxon>Pseudomonadati</taxon>
        <taxon>Campylobacterota</taxon>
        <taxon>Epsilonproteobacteria</taxon>
        <taxon>Campylobacterales</taxon>
        <taxon>Helicobacteraceae</taxon>
        <taxon>Wolinella</taxon>
    </lineage>
</organism>
<accession>Q7M8F7</accession>
<sequence length="331" mass="36686">MKNIKTSPYIPTDISIQEIGKNKIKISAYPFESGYAITLAHPLRRLLLGSSVGFAPTALKIEGAAHEFDSVRGIMEDVALFIVNLKSIRFKMRGDAERVTLDYSFKGPATIKGSDLVNDYVDVVTPNQHLATINEDATLTFSLIVQKGIGYVPSEETRNLIPEGYIPLDAYFTPVKKATYEIENVLVEDNPTYEKIVLEIETDGLIEPIAAFKDALGVMQKQMSVFNSEWSVSSAESTSSDEEDPELKPLLQKIEALNLSARSFNCLDRAGMKFVGELVLLGENELKEVKNLGKKSFDEIKDKLEEIGYPVGSDLAEEVSSALQKRLNKLK</sequence>